<proteinExistence type="inferred from homology"/>
<organism>
    <name type="scientific">Oryza sativa subsp. japonica</name>
    <name type="common">Rice</name>
    <dbReference type="NCBI Taxonomy" id="39947"/>
    <lineage>
        <taxon>Eukaryota</taxon>
        <taxon>Viridiplantae</taxon>
        <taxon>Streptophyta</taxon>
        <taxon>Embryophyta</taxon>
        <taxon>Tracheophyta</taxon>
        <taxon>Spermatophyta</taxon>
        <taxon>Magnoliopsida</taxon>
        <taxon>Liliopsida</taxon>
        <taxon>Poales</taxon>
        <taxon>Poaceae</taxon>
        <taxon>BOP clade</taxon>
        <taxon>Oryzoideae</taxon>
        <taxon>Oryzeae</taxon>
        <taxon>Oryzinae</taxon>
        <taxon>Oryza</taxon>
        <taxon>Oryza sativa</taxon>
    </lineage>
</organism>
<name>4CLL8_ORYSJ</name>
<reference key="1">
    <citation type="journal article" date="2005" name="Nature">
        <title>The map-based sequence of the rice genome.</title>
        <authorList>
            <consortium name="International rice genome sequencing project (IRGSP)"/>
        </authorList>
    </citation>
    <scope>NUCLEOTIDE SEQUENCE [LARGE SCALE GENOMIC DNA]</scope>
    <source>
        <strain>cv. Nipponbare</strain>
    </source>
</reference>
<reference key="2">
    <citation type="journal article" date="2013" name="Rice">
        <title>Improvement of the Oryza sativa Nipponbare reference genome using next generation sequence and optical map data.</title>
        <authorList>
            <person name="Kawahara Y."/>
            <person name="de la Bastide M."/>
            <person name="Hamilton J.P."/>
            <person name="Kanamori H."/>
            <person name="McCombie W.R."/>
            <person name="Ouyang S."/>
            <person name="Schwartz D.C."/>
            <person name="Tanaka T."/>
            <person name="Wu J."/>
            <person name="Zhou S."/>
            <person name="Childs K.L."/>
            <person name="Davidson R.M."/>
            <person name="Lin H."/>
            <person name="Quesada-Ocampo L."/>
            <person name="Vaillancourt B."/>
            <person name="Sakai H."/>
            <person name="Lee S.S."/>
            <person name="Kim J."/>
            <person name="Numa H."/>
            <person name="Itoh T."/>
            <person name="Buell C.R."/>
            <person name="Matsumoto T."/>
        </authorList>
    </citation>
    <scope>GENOME REANNOTATION</scope>
    <source>
        <strain>cv. Nipponbare</strain>
    </source>
</reference>
<reference key="3">
    <citation type="journal article" date="2008" name="New Phytol.">
        <title>Genome-wide analysis of a land plant-specific acyl:coenzyme A synthetase (ACS) gene family in Arabidopsis, poplar, rice and Physcomitrella.</title>
        <authorList>
            <person name="de Azevedo Souza C."/>
            <person name="Barbazuk B."/>
            <person name="Ralph S.G."/>
            <person name="Bohlmann J."/>
            <person name="Hamberger B."/>
            <person name="Douglas C.J."/>
        </authorList>
    </citation>
    <scope>GENE FAMILY</scope>
</reference>
<gene>
    <name type="primary">4CLL8</name>
    <name type="ordered locus">Os07g0639100</name>
    <name type="ordered locus">LOC_Os07g44560</name>
    <name type="ORF">OJ1340_C08.126</name>
</gene>
<evidence type="ECO:0000250" key="1">
    <source>
        <dbReference type="UniProtKB" id="O24146"/>
    </source>
</evidence>
<evidence type="ECO:0000250" key="2">
    <source>
        <dbReference type="UniProtKB" id="Q42524"/>
    </source>
</evidence>
<evidence type="ECO:0000305" key="3"/>
<feature type="chain" id="PRO_0000351634" description="Putative 4-coumarate--CoA ligase-like 8">
    <location>
        <begin position="1"/>
        <end position="609"/>
    </location>
</feature>
<feature type="region of interest" description="SBD1">
    <location>
        <begin position="276"/>
        <end position="348"/>
    </location>
</feature>
<feature type="region of interest" description="SBD2">
    <location>
        <begin position="349"/>
        <end position="450"/>
    </location>
</feature>
<feature type="binding site" evidence="1">
    <location>
        <position position="194"/>
    </location>
    <ligand>
        <name>ATP</name>
        <dbReference type="ChEBI" id="CHEBI:30616"/>
    </ligand>
</feature>
<feature type="binding site" evidence="1">
    <location>
        <position position="195"/>
    </location>
    <ligand>
        <name>ATP</name>
        <dbReference type="ChEBI" id="CHEBI:30616"/>
    </ligand>
</feature>
<feature type="binding site" evidence="1">
    <location>
        <position position="196"/>
    </location>
    <ligand>
        <name>ATP</name>
        <dbReference type="ChEBI" id="CHEBI:30616"/>
    </ligand>
</feature>
<feature type="binding site" evidence="1">
    <location>
        <position position="197"/>
    </location>
    <ligand>
        <name>ATP</name>
        <dbReference type="ChEBI" id="CHEBI:30616"/>
    </ligand>
</feature>
<feature type="binding site" evidence="1">
    <location>
        <position position="198"/>
    </location>
    <ligand>
        <name>ATP</name>
        <dbReference type="ChEBI" id="CHEBI:30616"/>
    </ligand>
</feature>
<feature type="binding site" evidence="1">
    <location>
        <position position="202"/>
    </location>
    <ligand>
        <name>ATP</name>
        <dbReference type="ChEBI" id="CHEBI:30616"/>
    </ligand>
</feature>
<feature type="binding site" evidence="1">
    <location>
        <position position="252"/>
    </location>
    <ligand>
        <name>(E)-4-coumaroyl-AMP</name>
        <dbReference type="ChEBI" id="CHEBI:192348"/>
    </ligand>
</feature>
<feature type="binding site" evidence="1">
    <location>
        <position position="256"/>
    </location>
    <ligand>
        <name>(E)-4-coumaroyl-AMP</name>
        <dbReference type="ChEBI" id="CHEBI:192348"/>
    </ligand>
</feature>
<feature type="binding site" evidence="1">
    <location>
        <position position="274"/>
    </location>
    <ligand>
        <name>CoA</name>
        <dbReference type="ChEBI" id="CHEBI:57287"/>
    </ligand>
</feature>
<feature type="binding site" evidence="1">
    <location>
        <position position="326"/>
    </location>
    <ligand>
        <name>(E)-4-coumaroyl-AMP</name>
        <dbReference type="ChEBI" id="CHEBI:192348"/>
    </ligand>
</feature>
<feature type="binding site" evidence="1">
    <location>
        <position position="348"/>
    </location>
    <ligand>
        <name>(E)-4-coumaroyl-AMP</name>
        <dbReference type="ChEBI" id="CHEBI:192348"/>
    </ligand>
</feature>
<feature type="binding site" evidence="1">
    <location>
        <position position="348"/>
    </location>
    <ligand>
        <name>ATP</name>
        <dbReference type="ChEBI" id="CHEBI:30616"/>
    </ligand>
</feature>
<feature type="binding site" evidence="1">
    <location>
        <position position="353"/>
    </location>
    <ligand>
        <name>(E)-4-coumaroyl-AMP</name>
        <dbReference type="ChEBI" id="CHEBI:192348"/>
    </ligand>
</feature>
<feature type="binding site" evidence="1">
    <location>
        <position position="353"/>
    </location>
    <ligand>
        <name>ATP</name>
        <dbReference type="ChEBI" id="CHEBI:30616"/>
    </ligand>
</feature>
<feature type="binding site" evidence="1">
    <location>
        <position position="361"/>
    </location>
    <ligand>
        <name>(E)-4-coumaroyl-AMP</name>
        <dbReference type="ChEBI" id="CHEBI:192348"/>
    </ligand>
</feature>
<feature type="binding site" evidence="1">
    <location>
        <position position="482"/>
    </location>
    <ligand>
        <name>ATP</name>
        <dbReference type="ChEBI" id="CHEBI:30616"/>
    </ligand>
</feature>
<feature type="binding site" evidence="1">
    <location>
        <position position="497"/>
    </location>
    <ligand>
        <name>ATP</name>
        <dbReference type="ChEBI" id="CHEBI:30616"/>
    </ligand>
</feature>
<feature type="binding site" evidence="1">
    <location>
        <position position="499"/>
    </location>
    <ligand>
        <name>(E)-4-coumaroyl-AMP</name>
        <dbReference type="ChEBI" id="CHEBI:192348"/>
    </ligand>
</feature>
<feature type="binding site" evidence="1">
    <location>
        <position position="503"/>
    </location>
    <ligand>
        <name>(E)-4-coumaroyl-AMP</name>
        <dbReference type="ChEBI" id="CHEBI:192348"/>
    </ligand>
</feature>
<feature type="binding site" evidence="1">
    <location>
        <position position="506"/>
    </location>
    <ligand>
        <name>CoA</name>
        <dbReference type="ChEBI" id="CHEBI:57287"/>
    </ligand>
</feature>
<feature type="binding site" evidence="1">
    <location>
        <position position="589"/>
    </location>
    <ligand>
        <name>ATP</name>
        <dbReference type="ChEBI" id="CHEBI:30616"/>
    </ligand>
</feature>
<sequence>METELHLAAGYCAATGVYRSGHPPQFAAAAALSFPEYILPHMLLPGRRARPAFVDASTGAALSFAGLRALSLRVARALAAAGLRRGRVALLLSPNSLHFPALSLAVLSLGAVLSAANPLLTPDELARQADDAKPFLALVTGELAPKLRSIAPDVKLVLVEQLLADVAAEVDDDETLDLPAANIGRDDAALLFYSSGTTGRSKGVVSTHGNAIAMAASLERAWGGGGGGGEKPQQYDDHDEAYGCVLPMFHMFGFSSFVMGTAALGATAVVVPGRFSVEKTMAAVEEYGVTRLLVVPPMVVKMVAAAAGDGEPSRRRLRLRQVVSSGAPLQREHMARFRSCFPAVNLGQCYGLTETTGIVTMCDLQHNDNGIDKVEMPPSSTDMTFVAVAATTTEVKERSTGGGGGGGGVSIGRLMPDVEAKIVDPDSGELLPPRRTGELWVRGPSTMRGYLNNEEATALALVAAAGSVSVSGGGERWLRTGDLCYVDSRGLVYVVDRVKELIKCNAYQVAPAELEDVLATHPDIHDAAVAPYPDKEAGEIPMAYVVKKQGSGHLQEDEVISFVQNKVAPYKKIRKVVFVDSIPRSPSGKILRRQLKNLLQGSILHRSRM</sequence>
<accession>Q8GVF9</accession>
<comment type="function">
    <text evidence="1">Carboxylate--CoA ligase that may use 4-coumarate as substrate. Follows a two-step reaction mechanism, wherein the carboxylate substrate first undergoes adenylation by ATP, followed by a thioesterification in the presence of CoA to yield the final CoA thioester.</text>
</comment>
<comment type="catalytic activity">
    <reaction evidence="1">
        <text>(E)-4-coumarate + ATP + CoA = (E)-4-coumaroyl-CoA + AMP + diphosphate</text>
        <dbReference type="Rhea" id="RHEA:19641"/>
        <dbReference type="ChEBI" id="CHEBI:12876"/>
        <dbReference type="ChEBI" id="CHEBI:30616"/>
        <dbReference type="ChEBI" id="CHEBI:33019"/>
        <dbReference type="ChEBI" id="CHEBI:57287"/>
        <dbReference type="ChEBI" id="CHEBI:85008"/>
        <dbReference type="ChEBI" id="CHEBI:456215"/>
        <dbReference type="EC" id="6.2.1.12"/>
    </reaction>
    <physiologicalReaction direction="left-to-right" evidence="1">
        <dbReference type="Rhea" id="RHEA:19642"/>
    </physiologicalReaction>
</comment>
<comment type="catalytic activity">
    <reaction evidence="1">
        <text>(E)-4-coumarate + ATP + H(+) = (E)-4-coumaroyl-AMP + diphosphate</text>
        <dbReference type="Rhea" id="RHEA:72419"/>
        <dbReference type="ChEBI" id="CHEBI:12876"/>
        <dbReference type="ChEBI" id="CHEBI:15378"/>
        <dbReference type="ChEBI" id="CHEBI:30616"/>
        <dbReference type="ChEBI" id="CHEBI:33019"/>
        <dbReference type="ChEBI" id="CHEBI:192348"/>
    </reaction>
    <physiologicalReaction direction="left-to-right" evidence="1">
        <dbReference type="Rhea" id="RHEA:72420"/>
    </physiologicalReaction>
</comment>
<comment type="catalytic activity">
    <reaction evidence="1">
        <text>(E)-4-coumaroyl-AMP + CoA = (E)-4-coumaroyl-CoA + AMP + H(+)</text>
        <dbReference type="Rhea" id="RHEA:72423"/>
        <dbReference type="ChEBI" id="CHEBI:15378"/>
        <dbReference type="ChEBI" id="CHEBI:57287"/>
        <dbReference type="ChEBI" id="CHEBI:85008"/>
        <dbReference type="ChEBI" id="CHEBI:192348"/>
        <dbReference type="ChEBI" id="CHEBI:456215"/>
    </reaction>
    <physiologicalReaction direction="left-to-right" evidence="1">
        <dbReference type="Rhea" id="RHEA:72424"/>
    </physiologicalReaction>
</comment>
<comment type="cofactor">
    <cofactor evidence="1">
        <name>Mg(2+)</name>
        <dbReference type="ChEBI" id="CHEBI:18420"/>
    </cofactor>
</comment>
<comment type="domain">
    <text evidence="2">Both substrate-binding domains (SBD1 and SBD2) are involved in the substrate recognition, and are sufficient to confer the substrate specificity.</text>
</comment>
<comment type="similarity">
    <text evidence="3">Belongs to the ATP-dependent AMP-binding enzyme family.</text>
</comment>
<dbReference type="EC" id="6.2.1.12" evidence="1"/>
<dbReference type="EMBL" id="AP005292">
    <property type="protein sequence ID" value="BAC45208.1"/>
    <property type="molecule type" value="Genomic_DNA"/>
</dbReference>
<dbReference type="EMBL" id="AP014963">
    <property type="status" value="NOT_ANNOTATED_CDS"/>
    <property type="molecule type" value="Genomic_DNA"/>
</dbReference>
<dbReference type="SMR" id="Q8GVF9"/>
<dbReference type="FunCoup" id="Q8GVF9">
    <property type="interactions" value="750"/>
</dbReference>
<dbReference type="STRING" id="39947.Q8GVF9"/>
<dbReference type="PaxDb" id="39947-Q8GVF9"/>
<dbReference type="eggNOG" id="KOG1176">
    <property type="taxonomic scope" value="Eukaryota"/>
</dbReference>
<dbReference type="InParanoid" id="Q8GVF9"/>
<dbReference type="Proteomes" id="UP000000763">
    <property type="component" value="Chromosome 7"/>
</dbReference>
<dbReference type="Proteomes" id="UP000059680">
    <property type="component" value="Chromosome 7"/>
</dbReference>
<dbReference type="GO" id="GO:0005777">
    <property type="term" value="C:peroxisome"/>
    <property type="evidence" value="ECO:0000318"/>
    <property type="project" value="GO_Central"/>
</dbReference>
<dbReference type="GO" id="GO:0016207">
    <property type="term" value="F:4-coumarate-CoA ligase activity"/>
    <property type="evidence" value="ECO:0007669"/>
    <property type="project" value="UniProtKB-ARBA"/>
</dbReference>
<dbReference type="GO" id="GO:0005524">
    <property type="term" value="F:ATP binding"/>
    <property type="evidence" value="ECO:0007669"/>
    <property type="project" value="UniProtKB-KW"/>
</dbReference>
<dbReference type="GO" id="GO:0016405">
    <property type="term" value="F:CoA-ligase activity"/>
    <property type="evidence" value="ECO:0000318"/>
    <property type="project" value="GO_Central"/>
</dbReference>
<dbReference type="GO" id="GO:0106290">
    <property type="term" value="F:trans-cinnamate-CoA ligase activity"/>
    <property type="evidence" value="ECO:0007669"/>
    <property type="project" value="UniProtKB-ARBA"/>
</dbReference>
<dbReference type="GO" id="GO:0009698">
    <property type="term" value="P:phenylpropanoid metabolic process"/>
    <property type="evidence" value="ECO:0007669"/>
    <property type="project" value="UniProtKB-ARBA"/>
</dbReference>
<dbReference type="CDD" id="cd05904">
    <property type="entry name" value="4CL"/>
    <property type="match status" value="1"/>
</dbReference>
<dbReference type="FunFam" id="3.30.300.30:FF:000007">
    <property type="entry name" value="4-coumarate--CoA ligase 2"/>
    <property type="match status" value="1"/>
</dbReference>
<dbReference type="Gene3D" id="3.30.300.30">
    <property type="match status" value="1"/>
</dbReference>
<dbReference type="Gene3D" id="3.40.50.12780">
    <property type="entry name" value="N-terminal domain of ligase-like"/>
    <property type="match status" value="1"/>
</dbReference>
<dbReference type="InterPro" id="IPR025110">
    <property type="entry name" value="AMP-bd_C"/>
</dbReference>
<dbReference type="InterPro" id="IPR045851">
    <property type="entry name" value="AMP-bd_C_sf"/>
</dbReference>
<dbReference type="InterPro" id="IPR020845">
    <property type="entry name" value="AMP-binding_CS"/>
</dbReference>
<dbReference type="InterPro" id="IPR000873">
    <property type="entry name" value="AMP-dep_synth/lig_dom"/>
</dbReference>
<dbReference type="InterPro" id="IPR042099">
    <property type="entry name" value="ANL_N_sf"/>
</dbReference>
<dbReference type="PANTHER" id="PTHR24096:SF338">
    <property type="entry name" value="4-COUMARATE--COA LIGASE-LIKE 8-RELATED"/>
    <property type="match status" value="1"/>
</dbReference>
<dbReference type="PANTHER" id="PTHR24096">
    <property type="entry name" value="LONG-CHAIN-FATTY-ACID--COA LIGASE"/>
    <property type="match status" value="1"/>
</dbReference>
<dbReference type="Pfam" id="PF00501">
    <property type="entry name" value="AMP-binding"/>
    <property type="match status" value="1"/>
</dbReference>
<dbReference type="Pfam" id="PF13193">
    <property type="entry name" value="AMP-binding_C"/>
    <property type="match status" value="1"/>
</dbReference>
<dbReference type="SUPFAM" id="SSF56801">
    <property type="entry name" value="Acetyl-CoA synthetase-like"/>
    <property type="match status" value="1"/>
</dbReference>
<dbReference type="PROSITE" id="PS00455">
    <property type="entry name" value="AMP_BINDING"/>
    <property type="match status" value="1"/>
</dbReference>
<protein>
    <recommendedName>
        <fullName>Putative 4-coumarate--CoA ligase-like 8</fullName>
        <ecNumber evidence="1">6.2.1.12</ecNumber>
    </recommendedName>
</protein>
<keyword id="KW-0067">ATP-binding</keyword>
<keyword id="KW-0436">Ligase</keyword>
<keyword id="KW-0460">Magnesium</keyword>
<keyword id="KW-0547">Nucleotide-binding</keyword>
<keyword id="KW-1185">Reference proteome</keyword>